<keyword id="KW-1185">Reference proteome</keyword>
<keyword id="KW-0687">Ribonucleoprotein</keyword>
<keyword id="KW-0689">Ribosomal protein</keyword>
<keyword id="KW-0694">RNA-binding</keyword>
<keyword id="KW-0699">rRNA-binding</keyword>
<feature type="chain" id="PRO_1000142291" description="Large ribosomal subunit protein uL22">
    <location>
        <begin position="1"/>
        <end position="119"/>
    </location>
</feature>
<protein>
    <recommendedName>
        <fullName evidence="1">Large ribosomal subunit protein uL22</fullName>
    </recommendedName>
    <alternativeName>
        <fullName evidence="2">50S ribosomal protein L22</fullName>
    </alternativeName>
</protein>
<accession>B4SBV2</accession>
<organism>
    <name type="scientific">Pelodictyon phaeoclathratiforme (strain DSM 5477 / BU-1)</name>
    <dbReference type="NCBI Taxonomy" id="324925"/>
    <lineage>
        <taxon>Bacteria</taxon>
        <taxon>Pseudomonadati</taxon>
        <taxon>Chlorobiota</taxon>
        <taxon>Chlorobiia</taxon>
        <taxon>Chlorobiales</taxon>
        <taxon>Chlorobiaceae</taxon>
        <taxon>Chlorobium/Pelodictyon group</taxon>
        <taxon>Pelodictyon</taxon>
    </lineage>
</organism>
<gene>
    <name evidence="1" type="primary">rplV</name>
    <name type="ordered locus">Ppha_0294</name>
</gene>
<sequence>MEAKAILRDTPTSPRKMRLVAGLVRGKPVDLAKAILLNSTKAASRNVMMTLKSAVANYAQRNPDERVSDQELFVKTIFVDEGTTLKRTLPAPMGRAFRIRKRSNHLTIVIDKVKNPVTK</sequence>
<name>RL22_PELPB</name>
<proteinExistence type="inferred from homology"/>
<evidence type="ECO:0000255" key="1">
    <source>
        <dbReference type="HAMAP-Rule" id="MF_01331"/>
    </source>
</evidence>
<evidence type="ECO:0000305" key="2"/>
<reference key="1">
    <citation type="submission" date="2008-06" db="EMBL/GenBank/DDBJ databases">
        <title>Complete sequence of Pelodictyon phaeoclathratiforme BU-1.</title>
        <authorList>
            <consortium name="US DOE Joint Genome Institute"/>
            <person name="Lucas S."/>
            <person name="Copeland A."/>
            <person name="Lapidus A."/>
            <person name="Glavina del Rio T."/>
            <person name="Dalin E."/>
            <person name="Tice H."/>
            <person name="Bruce D."/>
            <person name="Goodwin L."/>
            <person name="Pitluck S."/>
            <person name="Schmutz J."/>
            <person name="Larimer F."/>
            <person name="Land M."/>
            <person name="Hauser L."/>
            <person name="Kyrpides N."/>
            <person name="Mikhailova N."/>
            <person name="Liu Z."/>
            <person name="Li T."/>
            <person name="Zhao F."/>
            <person name="Overmann J."/>
            <person name="Bryant D.A."/>
            <person name="Richardson P."/>
        </authorList>
    </citation>
    <scope>NUCLEOTIDE SEQUENCE [LARGE SCALE GENOMIC DNA]</scope>
    <source>
        <strain>DSM 5477 / BU-1</strain>
    </source>
</reference>
<comment type="function">
    <text evidence="1">This protein binds specifically to 23S rRNA; its binding is stimulated by other ribosomal proteins, e.g. L4, L17, and L20. It is important during the early stages of 50S assembly. It makes multiple contacts with different domains of the 23S rRNA in the assembled 50S subunit and ribosome (By similarity).</text>
</comment>
<comment type="function">
    <text evidence="1">The globular domain of the protein is located near the polypeptide exit tunnel on the outside of the subunit, while an extended beta-hairpin is found that lines the wall of the exit tunnel in the center of the 70S ribosome.</text>
</comment>
<comment type="subunit">
    <text evidence="1">Part of the 50S ribosomal subunit.</text>
</comment>
<comment type="similarity">
    <text evidence="1">Belongs to the universal ribosomal protein uL22 family.</text>
</comment>
<dbReference type="EMBL" id="CP001110">
    <property type="protein sequence ID" value="ACF42627.1"/>
    <property type="molecule type" value="Genomic_DNA"/>
</dbReference>
<dbReference type="RefSeq" id="WP_012507123.1">
    <property type="nucleotide sequence ID" value="NC_011060.1"/>
</dbReference>
<dbReference type="SMR" id="B4SBV2"/>
<dbReference type="STRING" id="324925.Ppha_0294"/>
<dbReference type="KEGG" id="pph:Ppha_0294"/>
<dbReference type="eggNOG" id="COG0091">
    <property type="taxonomic scope" value="Bacteria"/>
</dbReference>
<dbReference type="HOGENOM" id="CLU_083987_3_1_10"/>
<dbReference type="OrthoDB" id="9805969at2"/>
<dbReference type="Proteomes" id="UP000002724">
    <property type="component" value="Chromosome"/>
</dbReference>
<dbReference type="GO" id="GO:0022625">
    <property type="term" value="C:cytosolic large ribosomal subunit"/>
    <property type="evidence" value="ECO:0007669"/>
    <property type="project" value="TreeGrafter"/>
</dbReference>
<dbReference type="GO" id="GO:0019843">
    <property type="term" value="F:rRNA binding"/>
    <property type="evidence" value="ECO:0007669"/>
    <property type="project" value="UniProtKB-UniRule"/>
</dbReference>
<dbReference type="GO" id="GO:0003735">
    <property type="term" value="F:structural constituent of ribosome"/>
    <property type="evidence" value="ECO:0007669"/>
    <property type="project" value="InterPro"/>
</dbReference>
<dbReference type="GO" id="GO:0006412">
    <property type="term" value="P:translation"/>
    <property type="evidence" value="ECO:0007669"/>
    <property type="project" value="UniProtKB-UniRule"/>
</dbReference>
<dbReference type="CDD" id="cd00336">
    <property type="entry name" value="Ribosomal_L22"/>
    <property type="match status" value="1"/>
</dbReference>
<dbReference type="Gene3D" id="3.90.470.10">
    <property type="entry name" value="Ribosomal protein L22/L17"/>
    <property type="match status" value="1"/>
</dbReference>
<dbReference type="HAMAP" id="MF_01331_B">
    <property type="entry name" value="Ribosomal_uL22_B"/>
    <property type="match status" value="1"/>
</dbReference>
<dbReference type="InterPro" id="IPR001063">
    <property type="entry name" value="Ribosomal_uL22"/>
</dbReference>
<dbReference type="InterPro" id="IPR005727">
    <property type="entry name" value="Ribosomal_uL22_bac/chlpt-type"/>
</dbReference>
<dbReference type="InterPro" id="IPR047867">
    <property type="entry name" value="Ribosomal_uL22_bac/org-type"/>
</dbReference>
<dbReference type="InterPro" id="IPR036394">
    <property type="entry name" value="Ribosomal_uL22_sf"/>
</dbReference>
<dbReference type="NCBIfam" id="TIGR01044">
    <property type="entry name" value="rplV_bact"/>
    <property type="match status" value="1"/>
</dbReference>
<dbReference type="PANTHER" id="PTHR13501">
    <property type="entry name" value="CHLOROPLAST 50S RIBOSOMAL PROTEIN L22-RELATED"/>
    <property type="match status" value="1"/>
</dbReference>
<dbReference type="PANTHER" id="PTHR13501:SF8">
    <property type="entry name" value="LARGE RIBOSOMAL SUBUNIT PROTEIN UL22M"/>
    <property type="match status" value="1"/>
</dbReference>
<dbReference type="Pfam" id="PF00237">
    <property type="entry name" value="Ribosomal_L22"/>
    <property type="match status" value="1"/>
</dbReference>
<dbReference type="SUPFAM" id="SSF54843">
    <property type="entry name" value="Ribosomal protein L22"/>
    <property type="match status" value="1"/>
</dbReference>